<name>RPOZ_POLNS</name>
<evidence type="ECO:0000255" key="1">
    <source>
        <dbReference type="HAMAP-Rule" id="MF_00366"/>
    </source>
</evidence>
<protein>
    <recommendedName>
        <fullName evidence="1">DNA-directed RNA polymerase subunit omega</fullName>
        <shortName evidence="1">RNAP omega subunit</shortName>
        <ecNumber evidence="1">2.7.7.6</ecNumber>
    </recommendedName>
    <alternativeName>
        <fullName evidence="1">RNA polymerase omega subunit</fullName>
    </alternativeName>
    <alternativeName>
        <fullName evidence="1">Transcriptase subunit omega</fullName>
    </alternativeName>
</protein>
<organism>
    <name type="scientific">Polynucleobacter necessarius subsp. necessarius (strain STIR1)</name>
    <dbReference type="NCBI Taxonomy" id="452638"/>
    <lineage>
        <taxon>Bacteria</taxon>
        <taxon>Pseudomonadati</taxon>
        <taxon>Pseudomonadota</taxon>
        <taxon>Betaproteobacteria</taxon>
        <taxon>Burkholderiales</taxon>
        <taxon>Burkholderiaceae</taxon>
        <taxon>Polynucleobacter</taxon>
    </lineage>
</organism>
<reference key="1">
    <citation type="journal article" date="2013" name="Proc. Natl. Acad. Sci. U.S.A.">
        <title>Polynucleobacter necessarius, a model for genome reduction in both free-living and symbiotic bacteria.</title>
        <authorList>
            <person name="Boscaro V."/>
            <person name="Felletti M."/>
            <person name="Vannini C."/>
            <person name="Ackerman M.S."/>
            <person name="Chain P.S."/>
            <person name="Malfatti S."/>
            <person name="Vergez L.M."/>
            <person name="Shin M."/>
            <person name="Doak T.G."/>
            <person name="Lynch M."/>
            <person name="Petroni G."/>
        </authorList>
    </citation>
    <scope>NUCLEOTIDE SEQUENCE [LARGE SCALE GENOMIC DNA]</scope>
    <source>
        <strain>STIR1</strain>
    </source>
</reference>
<proteinExistence type="inferred from homology"/>
<comment type="function">
    <text evidence="1">Promotes RNA polymerase assembly. Latches the N- and C-terminal regions of the beta' subunit thereby facilitating its interaction with the beta and alpha subunits.</text>
</comment>
<comment type="catalytic activity">
    <reaction evidence="1">
        <text>RNA(n) + a ribonucleoside 5'-triphosphate = RNA(n+1) + diphosphate</text>
        <dbReference type="Rhea" id="RHEA:21248"/>
        <dbReference type="Rhea" id="RHEA-COMP:14527"/>
        <dbReference type="Rhea" id="RHEA-COMP:17342"/>
        <dbReference type="ChEBI" id="CHEBI:33019"/>
        <dbReference type="ChEBI" id="CHEBI:61557"/>
        <dbReference type="ChEBI" id="CHEBI:140395"/>
        <dbReference type="EC" id="2.7.7.6"/>
    </reaction>
</comment>
<comment type="subunit">
    <text evidence="1">The RNAP catalytic core consists of 2 alpha, 1 beta, 1 beta' and 1 omega subunit. When a sigma factor is associated with the core the holoenzyme is formed, which can initiate transcription.</text>
</comment>
<comment type="similarity">
    <text evidence="1">Belongs to the RNA polymerase subunit omega family.</text>
</comment>
<accession>B1XUH5</accession>
<dbReference type="EC" id="2.7.7.6" evidence="1"/>
<dbReference type="EMBL" id="CP001010">
    <property type="protein sequence ID" value="ACB44002.1"/>
    <property type="molecule type" value="Genomic_DNA"/>
</dbReference>
<dbReference type="SMR" id="B1XUH5"/>
<dbReference type="STRING" id="452638.Pnec_0794"/>
<dbReference type="KEGG" id="pne:Pnec_0794"/>
<dbReference type="eggNOG" id="COG1758">
    <property type="taxonomic scope" value="Bacteria"/>
</dbReference>
<dbReference type="HOGENOM" id="CLU_125406_5_2_4"/>
<dbReference type="OrthoDB" id="9796300at2"/>
<dbReference type="GO" id="GO:0000428">
    <property type="term" value="C:DNA-directed RNA polymerase complex"/>
    <property type="evidence" value="ECO:0007669"/>
    <property type="project" value="UniProtKB-KW"/>
</dbReference>
<dbReference type="GO" id="GO:0003677">
    <property type="term" value="F:DNA binding"/>
    <property type="evidence" value="ECO:0007669"/>
    <property type="project" value="UniProtKB-UniRule"/>
</dbReference>
<dbReference type="GO" id="GO:0003899">
    <property type="term" value="F:DNA-directed RNA polymerase activity"/>
    <property type="evidence" value="ECO:0007669"/>
    <property type="project" value="UniProtKB-UniRule"/>
</dbReference>
<dbReference type="GO" id="GO:0006351">
    <property type="term" value="P:DNA-templated transcription"/>
    <property type="evidence" value="ECO:0007669"/>
    <property type="project" value="UniProtKB-UniRule"/>
</dbReference>
<dbReference type="Gene3D" id="3.90.940.10">
    <property type="match status" value="1"/>
</dbReference>
<dbReference type="HAMAP" id="MF_00366">
    <property type="entry name" value="RNApol_bact_RpoZ"/>
    <property type="match status" value="1"/>
</dbReference>
<dbReference type="InterPro" id="IPR003716">
    <property type="entry name" value="DNA-dir_RNA_pol_omega"/>
</dbReference>
<dbReference type="InterPro" id="IPR006110">
    <property type="entry name" value="Pol_omega/Rpo6/RPB6"/>
</dbReference>
<dbReference type="InterPro" id="IPR036161">
    <property type="entry name" value="RPB6/omega-like_sf"/>
</dbReference>
<dbReference type="NCBIfam" id="TIGR00690">
    <property type="entry name" value="rpoZ"/>
    <property type="match status" value="1"/>
</dbReference>
<dbReference type="PANTHER" id="PTHR34476">
    <property type="entry name" value="DNA-DIRECTED RNA POLYMERASE SUBUNIT OMEGA"/>
    <property type="match status" value="1"/>
</dbReference>
<dbReference type="PANTHER" id="PTHR34476:SF1">
    <property type="entry name" value="DNA-DIRECTED RNA POLYMERASE SUBUNIT OMEGA"/>
    <property type="match status" value="1"/>
</dbReference>
<dbReference type="Pfam" id="PF01192">
    <property type="entry name" value="RNA_pol_Rpb6"/>
    <property type="match status" value="1"/>
</dbReference>
<dbReference type="SMART" id="SM01409">
    <property type="entry name" value="RNA_pol_Rpb6"/>
    <property type="match status" value="1"/>
</dbReference>
<dbReference type="SUPFAM" id="SSF63562">
    <property type="entry name" value="RPB6/omega subunit-like"/>
    <property type="match status" value="1"/>
</dbReference>
<sequence length="67" mass="7478">MARITVEDCLKTIPNRFELVLAATYRARQLVQGHSPRVESRDKATVVALREVAAGVTDRDMLTKVPL</sequence>
<keyword id="KW-0240">DNA-directed RNA polymerase</keyword>
<keyword id="KW-0548">Nucleotidyltransferase</keyword>
<keyword id="KW-0804">Transcription</keyword>
<keyword id="KW-0808">Transferase</keyword>
<gene>
    <name evidence="1" type="primary">rpoZ</name>
    <name type="ordered locus">Pnec_0794</name>
</gene>
<feature type="chain" id="PRO_1000121253" description="DNA-directed RNA polymerase subunit omega">
    <location>
        <begin position="1"/>
        <end position="67"/>
    </location>
</feature>